<keyword id="KW-0997">Cell inner membrane</keyword>
<keyword id="KW-1003">Cell membrane</keyword>
<keyword id="KW-0472">Membrane</keyword>
<keyword id="KW-0812">Transmembrane</keyword>
<keyword id="KW-1133">Transmembrane helix</keyword>
<keyword id="KW-0813">Transport</keyword>
<comment type="function">
    <text evidence="1">Involved in succinate export with YjjP. Both proteins are required for export.</text>
</comment>
<comment type="subunit">
    <text evidence="1">The transporter is composed of YjjB and YjjP.</text>
</comment>
<comment type="subcellular location">
    <subcellularLocation>
        <location evidence="1">Cell inner membrane</location>
        <topology evidence="1">Multi-pass membrane protein</topology>
    </subcellularLocation>
</comment>
<comment type="similarity">
    <text evidence="1">Belongs to the ThrE exporter (TC 2.A.79) family.</text>
</comment>
<reference key="1">
    <citation type="submission" date="2008-02" db="EMBL/GenBank/DDBJ databases">
        <title>Complete sequence of Escherichia coli C str. ATCC 8739.</title>
        <authorList>
            <person name="Copeland A."/>
            <person name="Lucas S."/>
            <person name="Lapidus A."/>
            <person name="Glavina del Rio T."/>
            <person name="Dalin E."/>
            <person name="Tice H."/>
            <person name="Bruce D."/>
            <person name="Goodwin L."/>
            <person name="Pitluck S."/>
            <person name="Kiss H."/>
            <person name="Brettin T."/>
            <person name="Detter J.C."/>
            <person name="Han C."/>
            <person name="Kuske C.R."/>
            <person name="Schmutz J."/>
            <person name="Larimer F."/>
            <person name="Land M."/>
            <person name="Hauser L."/>
            <person name="Kyrpides N."/>
            <person name="Mikhailova N."/>
            <person name="Ingram L."/>
            <person name="Richardson P."/>
        </authorList>
    </citation>
    <scope>NUCLEOTIDE SEQUENCE [LARGE SCALE GENOMIC DNA]</scope>
    <source>
        <strain>ATCC 8739 / DSM 1576 / NBRC 3972 / NCIMB 8545 / WDCM 00012 / Crooks</strain>
    </source>
</reference>
<gene>
    <name evidence="1" type="primary">yjjB</name>
    <name type="ordered locus">EcolC_3692</name>
</gene>
<evidence type="ECO:0000255" key="1">
    <source>
        <dbReference type="HAMAP-Rule" id="MF_01191"/>
    </source>
</evidence>
<feature type="chain" id="PRO_1000085472" description="Probable succinate transporter subunit YjjB">
    <location>
        <begin position="1"/>
        <end position="157"/>
    </location>
</feature>
<feature type="transmembrane region" description="Helical" evidence="1">
    <location>
        <begin position="8"/>
        <end position="28"/>
    </location>
</feature>
<feature type="transmembrane region" description="Helical" evidence="1">
    <location>
        <begin position="50"/>
        <end position="70"/>
    </location>
</feature>
<feature type="transmembrane region" description="Helical" evidence="1">
    <location>
        <begin position="87"/>
        <end position="107"/>
    </location>
</feature>
<feature type="transmembrane region" description="Helical" evidence="1">
    <location>
        <begin position="129"/>
        <end position="149"/>
    </location>
</feature>
<dbReference type="EMBL" id="CP000946">
    <property type="protein sequence ID" value="ACA79303.1"/>
    <property type="molecule type" value="Genomic_DNA"/>
</dbReference>
<dbReference type="RefSeq" id="WP_000538176.1">
    <property type="nucleotide sequence ID" value="NZ_MTFT01000024.1"/>
</dbReference>
<dbReference type="KEGG" id="ecl:EcolC_3692"/>
<dbReference type="HOGENOM" id="CLU_117642_1_0_6"/>
<dbReference type="GO" id="GO:0005886">
    <property type="term" value="C:plasma membrane"/>
    <property type="evidence" value="ECO:0007669"/>
    <property type="project" value="UniProtKB-SubCell"/>
</dbReference>
<dbReference type="GO" id="GO:0015744">
    <property type="term" value="P:succinate transport"/>
    <property type="evidence" value="ECO:0007669"/>
    <property type="project" value="UniProtKB-UniRule"/>
</dbReference>
<dbReference type="HAMAP" id="MF_01191">
    <property type="entry name" value="YjjB"/>
    <property type="match status" value="1"/>
</dbReference>
<dbReference type="InterPro" id="IPR024528">
    <property type="entry name" value="ThrE_2"/>
</dbReference>
<dbReference type="InterPro" id="IPR050539">
    <property type="entry name" value="ThrE_Dicarb/AminoAcid_Exp"/>
</dbReference>
<dbReference type="InterPro" id="IPR020914">
    <property type="entry name" value="YjjB"/>
</dbReference>
<dbReference type="NCBIfam" id="NF007391">
    <property type="entry name" value="PRK09917.1"/>
    <property type="match status" value="1"/>
</dbReference>
<dbReference type="PANTHER" id="PTHR34390:SF1">
    <property type="entry name" value="SUCCINATE TRANSPORTER SUBUNIT YJJB-RELATED"/>
    <property type="match status" value="1"/>
</dbReference>
<dbReference type="PANTHER" id="PTHR34390">
    <property type="entry name" value="UPF0442 PROTEIN YJJB-RELATED"/>
    <property type="match status" value="1"/>
</dbReference>
<dbReference type="Pfam" id="PF12821">
    <property type="entry name" value="ThrE_2"/>
    <property type="match status" value="1"/>
</dbReference>
<name>YJJB_ECOLC</name>
<proteinExistence type="inferred from homology"/>
<accession>B1IS55</accession>
<protein>
    <recommendedName>
        <fullName evidence="1">Probable succinate transporter subunit YjjB</fullName>
    </recommendedName>
</protein>
<sequence>MGVIEFLFALAQDMILAAIPAVGFAMVFNVPVRALRWCALLGAIGHGSRMILMTSGLNIEWSTFMASMLVGTIGIQWSRWYLAHPKVFTVAAVIPMFPGISAYTAMISAVKISQLGYSEPLMITLLTNFLTASSIVGALSIGLSIPGLWLYRKRPRV</sequence>
<organism>
    <name type="scientific">Escherichia coli (strain ATCC 8739 / DSM 1576 / NBRC 3972 / NCIMB 8545 / WDCM 00012 / Crooks)</name>
    <dbReference type="NCBI Taxonomy" id="481805"/>
    <lineage>
        <taxon>Bacteria</taxon>
        <taxon>Pseudomonadati</taxon>
        <taxon>Pseudomonadota</taxon>
        <taxon>Gammaproteobacteria</taxon>
        <taxon>Enterobacterales</taxon>
        <taxon>Enterobacteriaceae</taxon>
        <taxon>Escherichia</taxon>
    </lineage>
</organism>